<keyword id="KW-0456">Lyase</keyword>
<keyword id="KW-0460">Magnesium</keyword>
<keyword id="KW-0464">Manganese</keyword>
<keyword id="KW-0479">Metal-binding</keyword>
<keyword id="KW-0686">Riboflavin biosynthesis</keyword>
<protein>
    <recommendedName>
        <fullName evidence="1">3,4-dihydroxy-2-butanone 4-phosphate synthase</fullName>
        <shortName evidence="1">DHBP synthase</shortName>
        <ecNumber evidence="1">4.1.99.12</ecNumber>
    </recommendedName>
</protein>
<proteinExistence type="inferred from homology"/>
<name>RIBB_YERPY</name>
<sequence>MNQTLLSDFGTPVERVERAIDALRNGRGVMVLDDESRENEGDMVFAAEAMTLEQMALTIRHGSGIVCLCITDERRQQLDLPMMVTHNSSQFQTAFTVTIEAAEGVTTGVSAADRLTTIRKAIADNAKPADLNRPGHVFPLRGQPGGVLSRRGHTEASIDLATLAGYKPAGVLCELTNDDGSMAHAPEVIAFAKLHDMPVVTIDDLAAYLQSRAKKAS</sequence>
<feature type="chain" id="PRO_1000098295" description="3,4-dihydroxy-2-butanone 4-phosphate synthase">
    <location>
        <begin position="1"/>
        <end position="217"/>
    </location>
</feature>
<feature type="binding site" evidence="1">
    <location>
        <begin position="37"/>
        <end position="38"/>
    </location>
    <ligand>
        <name>D-ribulose 5-phosphate</name>
        <dbReference type="ChEBI" id="CHEBI:58121"/>
    </ligand>
</feature>
<feature type="binding site" evidence="1">
    <location>
        <position position="38"/>
    </location>
    <ligand>
        <name>Mg(2+)</name>
        <dbReference type="ChEBI" id="CHEBI:18420"/>
        <label>1</label>
    </ligand>
</feature>
<feature type="binding site" evidence="1">
    <location>
        <position position="38"/>
    </location>
    <ligand>
        <name>Mg(2+)</name>
        <dbReference type="ChEBI" id="CHEBI:18420"/>
        <label>2</label>
    </ligand>
</feature>
<feature type="binding site" evidence="1">
    <location>
        <position position="42"/>
    </location>
    <ligand>
        <name>D-ribulose 5-phosphate</name>
        <dbReference type="ChEBI" id="CHEBI:58121"/>
    </ligand>
</feature>
<feature type="binding site" evidence="1">
    <location>
        <begin position="150"/>
        <end position="154"/>
    </location>
    <ligand>
        <name>D-ribulose 5-phosphate</name>
        <dbReference type="ChEBI" id="CHEBI:58121"/>
    </ligand>
</feature>
<feature type="binding site" evidence="1">
    <location>
        <position position="153"/>
    </location>
    <ligand>
        <name>Mg(2+)</name>
        <dbReference type="ChEBI" id="CHEBI:18420"/>
        <label>2</label>
    </ligand>
</feature>
<feature type="binding site" evidence="1">
    <location>
        <position position="174"/>
    </location>
    <ligand>
        <name>D-ribulose 5-phosphate</name>
        <dbReference type="ChEBI" id="CHEBI:58121"/>
    </ligand>
</feature>
<feature type="site" description="Essential for catalytic activity" evidence="1">
    <location>
        <position position="136"/>
    </location>
</feature>
<feature type="site" description="Essential for catalytic activity" evidence="1">
    <location>
        <position position="174"/>
    </location>
</feature>
<organism>
    <name type="scientific">Yersinia pseudotuberculosis serotype O:3 (strain YPIII)</name>
    <dbReference type="NCBI Taxonomy" id="502800"/>
    <lineage>
        <taxon>Bacteria</taxon>
        <taxon>Pseudomonadati</taxon>
        <taxon>Pseudomonadota</taxon>
        <taxon>Gammaproteobacteria</taxon>
        <taxon>Enterobacterales</taxon>
        <taxon>Yersiniaceae</taxon>
        <taxon>Yersinia</taxon>
    </lineage>
</organism>
<comment type="function">
    <text evidence="1">Catalyzes the conversion of D-ribulose 5-phosphate to formate and 3,4-dihydroxy-2-butanone 4-phosphate.</text>
</comment>
<comment type="catalytic activity">
    <reaction evidence="1">
        <text>D-ribulose 5-phosphate = (2S)-2-hydroxy-3-oxobutyl phosphate + formate + H(+)</text>
        <dbReference type="Rhea" id="RHEA:18457"/>
        <dbReference type="ChEBI" id="CHEBI:15378"/>
        <dbReference type="ChEBI" id="CHEBI:15740"/>
        <dbReference type="ChEBI" id="CHEBI:58121"/>
        <dbReference type="ChEBI" id="CHEBI:58830"/>
        <dbReference type="EC" id="4.1.99.12"/>
    </reaction>
</comment>
<comment type="cofactor">
    <cofactor evidence="1">
        <name>Mg(2+)</name>
        <dbReference type="ChEBI" id="CHEBI:18420"/>
    </cofactor>
    <cofactor evidence="1">
        <name>Mn(2+)</name>
        <dbReference type="ChEBI" id="CHEBI:29035"/>
    </cofactor>
    <text evidence="1">Binds 2 divalent metal cations per subunit. Magnesium or manganese.</text>
</comment>
<comment type="pathway">
    <text evidence="1">Cofactor biosynthesis; riboflavin biosynthesis; 2-hydroxy-3-oxobutyl phosphate from D-ribulose 5-phosphate: step 1/1.</text>
</comment>
<comment type="subunit">
    <text evidence="1">Homodimer.</text>
</comment>
<comment type="similarity">
    <text evidence="1">Belongs to the DHBP synthase family.</text>
</comment>
<accession>B1JM30</accession>
<dbReference type="EC" id="4.1.99.12" evidence="1"/>
<dbReference type="EMBL" id="CP000950">
    <property type="protein sequence ID" value="ACA66952.1"/>
    <property type="molecule type" value="Genomic_DNA"/>
</dbReference>
<dbReference type="RefSeq" id="WP_002212190.1">
    <property type="nucleotide sequence ID" value="NZ_CP009792.1"/>
</dbReference>
<dbReference type="SMR" id="B1JM30"/>
<dbReference type="GeneID" id="57973967"/>
<dbReference type="KEGG" id="ypy:YPK_0649"/>
<dbReference type="PATRIC" id="fig|502800.11.peg.1265"/>
<dbReference type="UniPathway" id="UPA00275">
    <property type="reaction ID" value="UER00399"/>
</dbReference>
<dbReference type="GO" id="GO:0005829">
    <property type="term" value="C:cytosol"/>
    <property type="evidence" value="ECO:0007669"/>
    <property type="project" value="TreeGrafter"/>
</dbReference>
<dbReference type="GO" id="GO:0008686">
    <property type="term" value="F:3,4-dihydroxy-2-butanone-4-phosphate synthase activity"/>
    <property type="evidence" value="ECO:0007669"/>
    <property type="project" value="UniProtKB-UniRule"/>
</dbReference>
<dbReference type="GO" id="GO:0000287">
    <property type="term" value="F:magnesium ion binding"/>
    <property type="evidence" value="ECO:0007669"/>
    <property type="project" value="UniProtKB-UniRule"/>
</dbReference>
<dbReference type="GO" id="GO:0030145">
    <property type="term" value="F:manganese ion binding"/>
    <property type="evidence" value="ECO:0007669"/>
    <property type="project" value="UniProtKB-UniRule"/>
</dbReference>
<dbReference type="GO" id="GO:0009231">
    <property type="term" value="P:riboflavin biosynthetic process"/>
    <property type="evidence" value="ECO:0007669"/>
    <property type="project" value="UniProtKB-UniRule"/>
</dbReference>
<dbReference type="FunFam" id="3.90.870.10:FF:000002">
    <property type="entry name" value="3,4-dihydroxy-2-butanone 4-phosphate synthase"/>
    <property type="match status" value="1"/>
</dbReference>
<dbReference type="Gene3D" id="3.90.870.10">
    <property type="entry name" value="DHBP synthase"/>
    <property type="match status" value="1"/>
</dbReference>
<dbReference type="HAMAP" id="MF_00180">
    <property type="entry name" value="RibB"/>
    <property type="match status" value="1"/>
</dbReference>
<dbReference type="InterPro" id="IPR017945">
    <property type="entry name" value="DHBP_synth_RibB-like_a/b_dom"/>
</dbReference>
<dbReference type="InterPro" id="IPR000422">
    <property type="entry name" value="DHBP_synthase_RibB"/>
</dbReference>
<dbReference type="NCBIfam" id="TIGR00506">
    <property type="entry name" value="ribB"/>
    <property type="match status" value="1"/>
</dbReference>
<dbReference type="PANTHER" id="PTHR21327:SF38">
    <property type="entry name" value="3,4-DIHYDROXY-2-BUTANONE 4-PHOSPHATE SYNTHASE"/>
    <property type="match status" value="1"/>
</dbReference>
<dbReference type="PANTHER" id="PTHR21327">
    <property type="entry name" value="GTP CYCLOHYDROLASE II-RELATED"/>
    <property type="match status" value="1"/>
</dbReference>
<dbReference type="Pfam" id="PF00926">
    <property type="entry name" value="DHBP_synthase"/>
    <property type="match status" value="1"/>
</dbReference>
<dbReference type="SUPFAM" id="SSF55821">
    <property type="entry name" value="YrdC/RibB"/>
    <property type="match status" value="1"/>
</dbReference>
<reference key="1">
    <citation type="submission" date="2008-02" db="EMBL/GenBank/DDBJ databases">
        <title>Complete sequence of Yersinia pseudotuberculosis YPIII.</title>
        <authorList>
            <consortium name="US DOE Joint Genome Institute"/>
            <person name="Copeland A."/>
            <person name="Lucas S."/>
            <person name="Lapidus A."/>
            <person name="Glavina del Rio T."/>
            <person name="Dalin E."/>
            <person name="Tice H."/>
            <person name="Bruce D."/>
            <person name="Goodwin L."/>
            <person name="Pitluck S."/>
            <person name="Munk A.C."/>
            <person name="Brettin T."/>
            <person name="Detter J.C."/>
            <person name="Han C."/>
            <person name="Tapia R."/>
            <person name="Schmutz J."/>
            <person name="Larimer F."/>
            <person name="Land M."/>
            <person name="Hauser L."/>
            <person name="Challacombe J.F."/>
            <person name="Green L."/>
            <person name="Lindler L.E."/>
            <person name="Nikolich M.P."/>
            <person name="Richardson P."/>
        </authorList>
    </citation>
    <scope>NUCLEOTIDE SEQUENCE [LARGE SCALE GENOMIC DNA]</scope>
    <source>
        <strain>YPIII</strain>
    </source>
</reference>
<evidence type="ECO:0000255" key="1">
    <source>
        <dbReference type="HAMAP-Rule" id="MF_00180"/>
    </source>
</evidence>
<gene>
    <name evidence="1" type="primary">ribB</name>
    <name type="ordered locus">YPK_0649</name>
</gene>